<accession>B7LXF9</accession>
<reference key="1">
    <citation type="journal article" date="2009" name="PLoS Genet.">
        <title>Organised genome dynamics in the Escherichia coli species results in highly diverse adaptive paths.</title>
        <authorList>
            <person name="Touchon M."/>
            <person name="Hoede C."/>
            <person name="Tenaillon O."/>
            <person name="Barbe V."/>
            <person name="Baeriswyl S."/>
            <person name="Bidet P."/>
            <person name="Bingen E."/>
            <person name="Bonacorsi S."/>
            <person name="Bouchier C."/>
            <person name="Bouvet O."/>
            <person name="Calteau A."/>
            <person name="Chiapello H."/>
            <person name="Clermont O."/>
            <person name="Cruveiller S."/>
            <person name="Danchin A."/>
            <person name="Diard M."/>
            <person name="Dossat C."/>
            <person name="Karoui M.E."/>
            <person name="Frapy E."/>
            <person name="Garry L."/>
            <person name="Ghigo J.M."/>
            <person name="Gilles A.M."/>
            <person name="Johnson J."/>
            <person name="Le Bouguenec C."/>
            <person name="Lescat M."/>
            <person name="Mangenot S."/>
            <person name="Martinez-Jehanne V."/>
            <person name="Matic I."/>
            <person name="Nassif X."/>
            <person name="Oztas S."/>
            <person name="Petit M.A."/>
            <person name="Pichon C."/>
            <person name="Rouy Z."/>
            <person name="Ruf C.S."/>
            <person name="Schneider D."/>
            <person name="Tourret J."/>
            <person name="Vacherie B."/>
            <person name="Vallenet D."/>
            <person name="Medigue C."/>
            <person name="Rocha E.P.C."/>
            <person name="Denamur E."/>
        </authorList>
    </citation>
    <scope>NUCLEOTIDE SEQUENCE [LARGE SCALE GENOMIC DNA]</scope>
    <source>
        <strain>IAI1</strain>
    </source>
</reference>
<gene>
    <name evidence="1" type="primary">ispD</name>
    <name type="ordered locus">ECIAI1_2848</name>
</gene>
<organism>
    <name type="scientific">Escherichia coli O8 (strain IAI1)</name>
    <dbReference type="NCBI Taxonomy" id="585034"/>
    <lineage>
        <taxon>Bacteria</taxon>
        <taxon>Pseudomonadati</taxon>
        <taxon>Pseudomonadota</taxon>
        <taxon>Gammaproteobacteria</taxon>
        <taxon>Enterobacterales</taxon>
        <taxon>Enterobacteriaceae</taxon>
        <taxon>Escherichia</taxon>
    </lineage>
</organism>
<name>ISPD_ECO8A</name>
<sequence>MATTHLDVCAVVPAAGFGRRMQTECPKQYLSIGNQTILEHSVHALLAHPRVKRVVIAISPGDSRFAQLPLANHPQITVVDGGDERADSVLAGLKAAGDAQWVLVHDAARPCLHQDDLARLLALSETSRTGGILAAPVRDTMKRAEPGKNAIAHTVDRNGLWHALTPQFFPRELLHDCLTRALNEGATITDEASALEYCGFHPQLVEGRADNIKVTRPEDLALAEFYLTRTIHQENT</sequence>
<keyword id="KW-0414">Isoprene biosynthesis</keyword>
<keyword id="KW-0548">Nucleotidyltransferase</keyword>
<keyword id="KW-0808">Transferase</keyword>
<protein>
    <recommendedName>
        <fullName evidence="1">2-C-methyl-D-erythritol 4-phosphate cytidylyltransferase</fullName>
        <ecNumber evidence="1">2.7.7.60</ecNumber>
    </recommendedName>
    <alternativeName>
        <fullName evidence="1">4-diphosphocytidyl-2C-methyl-D-erythritol synthase</fullName>
    </alternativeName>
    <alternativeName>
        <fullName evidence="1">MEP cytidylyltransferase</fullName>
        <shortName evidence="1">MCT</shortName>
    </alternativeName>
</protein>
<comment type="function">
    <text evidence="1">Catalyzes the formation of 4-diphosphocytidyl-2-C-methyl-D-erythritol from CTP and 2-C-methyl-D-erythritol 4-phosphate (MEP).</text>
</comment>
<comment type="catalytic activity">
    <reaction evidence="1">
        <text>2-C-methyl-D-erythritol 4-phosphate + CTP + H(+) = 4-CDP-2-C-methyl-D-erythritol + diphosphate</text>
        <dbReference type="Rhea" id="RHEA:13429"/>
        <dbReference type="ChEBI" id="CHEBI:15378"/>
        <dbReference type="ChEBI" id="CHEBI:33019"/>
        <dbReference type="ChEBI" id="CHEBI:37563"/>
        <dbReference type="ChEBI" id="CHEBI:57823"/>
        <dbReference type="ChEBI" id="CHEBI:58262"/>
        <dbReference type="EC" id="2.7.7.60"/>
    </reaction>
</comment>
<comment type="pathway">
    <text evidence="1">Isoprenoid biosynthesis; isopentenyl diphosphate biosynthesis via DXP pathway; isopentenyl diphosphate from 1-deoxy-D-xylulose 5-phosphate: step 2/6.</text>
</comment>
<comment type="subunit">
    <text evidence="1">Homodimer.</text>
</comment>
<comment type="similarity">
    <text evidence="1">Belongs to the IspD/TarI cytidylyltransferase family. IspD subfamily.</text>
</comment>
<evidence type="ECO:0000255" key="1">
    <source>
        <dbReference type="HAMAP-Rule" id="MF_00108"/>
    </source>
</evidence>
<proteinExistence type="inferred from homology"/>
<dbReference type="EC" id="2.7.7.60" evidence="1"/>
<dbReference type="EMBL" id="CU928160">
    <property type="protein sequence ID" value="CAQ99671.1"/>
    <property type="molecule type" value="Genomic_DNA"/>
</dbReference>
<dbReference type="RefSeq" id="WP_000246138.1">
    <property type="nucleotide sequence ID" value="NC_011741.1"/>
</dbReference>
<dbReference type="SMR" id="B7LXF9"/>
<dbReference type="GeneID" id="93779259"/>
<dbReference type="KEGG" id="ecr:ECIAI1_2848"/>
<dbReference type="HOGENOM" id="CLU_061281_3_1_6"/>
<dbReference type="UniPathway" id="UPA00056">
    <property type="reaction ID" value="UER00093"/>
</dbReference>
<dbReference type="GO" id="GO:0050518">
    <property type="term" value="F:2-C-methyl-D-erythritol 4-phosphate cytidylyltransferase activity"/>
    <property type="evidence" value="ECO:0007669"/>
    <property type="project" value="UniProtKB-UniRule"/>
</dbReference>
<dbReference type="GO" id="GO:0019288">
    <property type="term" value="P:isopentenyl diphosphate biosynthetic process, methylerythritol 4-phosphate pathway"/>
    <property type="evidence" value="ECO:0007669"/>
    <property type="project" value="UniProtKB-UniRule"/>
</dbReference>
<dbReference type="CDD" id="cd02516">
    <property type="entry name" value="CDP-ME_synthetase"/>
    <property type="match status" value="1"/>
</dbReference>
<dbReference type="FunFam" id="3.90.550.10:FF:000003">
    <property type="entry name" value="2-C-methyl-D-erythritol 4-phosphate cytidylyltransferase"/>
    <property type="match status" value="1"/>
</dbReference>
<dbReference type="Gene3D" id="3.90.550.10">
    <property type="entry name" value="Spore Coat Polysaccharide Biosynthesis Protein SpsA, Chain A"/>
    <property type="match status" value="1"/>
</dbReference>
<dbReference type="HAMAP" id="MF_00108">
    <property type="entry name" value="IspD"/>
    <property type="match status" value="1"/>
</dbReference>
<dbReference type="InterPro" id="IPR001228">
    <property type="entry name" value="IspD"/>
</dbReference>
<dbReference type="InterPro" id="IPR034683">
    <property type="entry name" value="IspD/TarI"/>
</dbReference>
<dbReference type="InterPro" id="IPR050088">
    <property type="entry name" value="IspD/TarI_cytidylyltransf_bact"/>
</dbReference>
<dbReference type="InterPro" id="IPR018294">
    <property type="entry name" value="ISPD_synthase_CS"/>
</dbReference>
<dbReference type="InterPro" id="IPR029044">
    <property type="entry name" value="Nucleotide-diphossugar_trans"/>
</dbReference>
<dbReference type="NCBIfam" id="TIGR00453">
    <property type="entry name" value="ispD"/>
    <property type="match status" value="1"/>
</dbReference>
<dbReference type="PANTHER" id="PTHR32125">
    <property type="entry name" value="2-C-METHYL-D-ERYTHRITOL 4-PHOSPHATE CYTIDYLYLTRANSFERASE, CHLOROPLASTIC"/>
    <property type="match status" value="1"/>
</dbReference>
<dbReference type="PANTHER" id="PTHR32125:SF4">
    <property type="entry name" value="2-C-METHYL-D-ERYTHRITOL 4-PHOSPHATE CYTIDYLYLTRANSFERASE, CHLOROPLASTIC"/>
    <property type="match status" value="1"/>
</dbReference>
<dbReference type="Pfam" id="PF01128">
    <property type="entry name" value="IspD"/>
    <property type="match status" value="1"/>
</dbReference>
<dbReference type="SUPFAM" id="SSF53448">
    <property type="entry name" value="Nucleotide-diphospho-sugar transferases"/>
    <property type="match status" value="1"/>
</dbReference>
<dbReference type="PROSITE" id="PS01295">
    <property type="entry name" value="ISPD"/>
    <property type="match status" value="1"/>
</dbReference>
<feature type="chain" id="PRO_1000117441" description="2-C-methyl-D-erythritol 4-phosphate cytidylyltransferase">
    <location>
        <begin position="1"/>
        <end position="236"/>
    </location>
</feature>
<feature type="site" description="Transition state stabilizer" evidence="1">
    <location>
        <position position="20"/>
    </location>
</feature>
<feature type="site" description="Transition state stabilizer" evidence="1">
    <location>
        <position position="27"/>
    </location>
</feature>
<feature type="site" description="Positions MEP for the nucleophilic attack" evidence="1">
    <location>
        <position position="157"/>
    </location>
</feature>
<feature type="site" description="Positions MEP for the nucleophilic attack" evidence="1">
    <location>
        <position position="213"/>
    </location>
</feature>